<evidence type="ECO:0000250" key="1"/>
<evidence type="ECO:0000255" key="2">
    <source>
        <dbReference type="HAMAP-Rule" id="MF_00118"/>
    </source>
</evidence>
<sequence>MAREKFERNKPHVNIGTIGHVDHGKTTLTAAITNVLAKKGQAQAQDYGDIDGAPEERERGITINTAHVEYETDGRHYAHVDCPGHADYVKNMITGAAQMDGAIIVVAATDGAMAQTKEHILLAKQVGVPSLVVALNKCDMVDDAEMIELVEMEIRELLSSYDFPGDDIPVIQVSALKALEGDSEWEGKIDELMKSVDESIPEPEREVDKPFLMAVEDVFSITGRGTVATGRIERGKIKVGEEVEIVGIKDTRVTTVTGVEMFRKLLDEGMAGDNVGLLLRGVQKEDIERGMVLVKKGSITPHTKFEGEVYVLKKEEGGRHTPFFAGYRPQFYIRTTDVTGQITAFTADDGSNVEMVMPGDRIKMTGELICPVAIEQGMRFAIREGGRTIGAGVVSKIIK</sequence>
<feature type="chain" id="PRO_1000095088" description="Elongation factor Tu">
    <location>
        <begin position="1"/>
        <end position="399"/>
    </location>
</feature>
<feature type="domain" description="tr-type G">
    <location>
        <begin position="10"/>
        <end position="204"/>
    </location>
</feature>
<feature type="region of interest" description="G1" evidence="1">
    <location>
        <begin position="19"/>
        <end position="26"/>
    </location>
</feature>
<feature type="region of interest" description="G2" evidence="1">
    <location>
        <begin position="60"/>
        <end position="64"/>
    </location>
</feature>
<feature type="region of interest" description="G3" evidence="1">
    <location>
        <begin position="81"/>
        <end position="84"/>
    </location>
</feature>
<feature type="region of interest" description="G4" evidence="1">
    <location>
        <begin position="136"/>
        <end position="139"/>
    </location>
</feature>
<feature type="region of interest" description="G5" evidence="1">
    <location>
        <begin position="174"/>
        <end position="176"/>
    </location>
</feature>
<feature type="binding site" evidence="2">
    <location>
        <begin position="19"/>
        <end position="26"/>
    </location>
    <ligand>
        <name>GTP</name>
        <dbReference type="ChEBI" id="CHEBI:37565"/>
    </ligand>
</feature>
<feature type="binding site" evidence="2">
    <location>
        <position position="26"/>
    </location>
    <ligand>
        <name>Mg(2+)</name>
        <dbReference type="ChEBI" id="CHEBI:18420"/>
    </ligand>
</feature>
<feature type="binding site" evidence="2">
    <location>
        <begin position="81"/>
        <end position="85"/>
    </location>
    <ligand>
        <name>GTP</name>
        <dbReference type="ChEBI" id="CHEBI:37565"/>
    </ligand>
</feature>
<feature type="binding site" evidence="2">
    <location>
        <begin position="136"/>
        <end position="139"/>
    </location>
    <ligand>
        <name>GTP</name>
        <dbReference type="ChEBI" id="CHEBI:37565"/>
    </ligand>
</feature>
<proteinExistence type="inferred from homology"/>
<protein>
    <recommendedName>
        <fullName evidence="2">Elongation factor Tu</fullName>
        <shortName evidence="2">EF-Tu</shortName>
        <ecNumber evidence="2">3.6.5.3</ecNumber>
    </recommendedName>
</protein>
<name>EFTU_PROM4</name>
<gene>
    <name evidence="2" type="primary">tuf</name>
    <name type="ordered locus">P9211_16311</name>
</gene>
<keyword id="KW-0963">Cytoplasm</keyword>
<keyword id="KW-0251">Elongation factor</keyword>
<keyword id="KW-0342">GTP-binding</keyword>
<keyword id="KW-0378">Hydrolase</keyword>
<keyword id="KW-0460">Magnesium</keyword>
<keyword id="KW-0479">Metal-binding</keyword>
<keyword id="KW-0547">Nucleotide-binding</keyword>
<keyword id="KW-0648">Protein biosynthesis</keyword>
<keyword id="KW-1185">Reference proteome</keyword>
<accession>A9BCK0</accession>
<organism>
    <name type="scientific">Prochlorococcus marinus (strain MIT 9211)</name>
    <dbReference type="NCBI Taxonomy" id="93059"/>
    <lineage>
        <taxon>Bacteria</taxon>
        <taxon>Bacillati</taxon>
        <taxon>Cyanobacteriota</taxon>
        <taxon>Cyanophyceae</taxon>
        <taxon>Synechococcales</taxon>
        <taxon>Prochlorococcaceae</taxon>
        <taxon>Prochlorococcus</taxon>
    </lineage>
</organism>
<reference key="1">
    <citation type="journal article" date="2007" name="PLoS Genet.">
        <title>Patterns and implications of gene gain and loss in the evolution of Prochlorococcus.</title>
        <authorList>
            <person name="Kettler G.C."/>
            <person name="Martiny A.C."/>
            <person name="Huang K."/>
            <person name="Zucker J."/>
            <person name="Coleman M.L."/>
            <person name="Rodrigue S."/>
            <person name="Chen F."/>
            <person name="Lapidus A."/>
            <person name="Ferriera S."/>
            <person name="Johnson J."/>
            <person name="Steglich C."/>
            <person name="Church G.M."/>
            <person name="Richardson P."/>
            <person name="Chisholm S.W."/>
        </authorList>
    </citation>
    <scope>NUCLEOTIDE SEQUENCE [LARGE SCALE GENOMIC DNA]</scope>
    <source>
        <strain>MIT 9211</strain>
    </source>
</reference>
<comment type="function">
    <text evidence="2">GTP hydrolase that promotes the GTP-dependent binding of aminoacyl-tRNA to the A-site of ribosomes during protein biosynthesis.</text>
</comment>
<comment type="catalytic activity">
    <reaction evidence="2">
        <text>GTP + H2O = GDP + phosphate + H(+)</text>
        <dbReference type="Rhea" id="RHEA:19669"/>
        <dbReference type="ChEBI" id="CHEBI:15377"/>
        <dbReference type="ChEBI" id="CHEBI:15378"/>
        <dbReference type="ChEBI" id="CHEBI:37565"/>
        <dbReference type="ChEBI" id="CHEBI:43474"/>
        <dbReference type="ChEBI" id="CHEBI:58189"/>
        <dbReference type="EC" id="3.6.5.3"/>
    </reaction>
    <physiologicalReaction direction="left-to-right" evidence="2">
        <dbReference type="Rhea" id="RHEA:19670"/>
    </physiologicalReaction>
</comment>
<comment type="subunit">
    <text evidence="2">Monomer.</text>
</comment>
<comment type="subcellular location">
    <subcellularLocation>
        <location evidence="2">Cytoplasm</location>
    </subcellularLocation>
</comment>
<comment type="similarity">
    <text evidence="2">Belongs to the TRAFAC class translation factor GTPase superfamily. Classic translation factor GTPase family. EF-Tu/EF-1A subfamily.</text>
</comment>
<dbReference type="EC" id="3.6.5.3" evidence="2"/>
<dbReference type="EMBL" id="CP000878">
    <property type="protein sequence ID" value="ABX09562.1"/>
    <property type="molecule type" value="Genomic_DNA"/>
</dbReference>
<dbReference type="RefSeq" id="WP_012196183.1">
    <property type="nucleotide sequence ID" value="NC_009976.1"/>
</dbReference>
<dbReference type="SMR" id="A9BCK0"/>
<dbReference type="STRING" id="93059.P9211_16311"/>
<dbReference type="KEGG" id="pmj:P9211_16311"/>
<dbReference type="eggNOG" id="COG0050">
    <property type="taxonomic scope" value="Bacteria"/>
</dbReference>
<dbReference type="HOGENOM" id="CLU_007265_0_1_3"/>
<dbReference type="OrthoDB" id="9804504at2"/>
<dbReference type="Proteomes" id="UP000000788">
    <property type="component" value="Chromosome"/>
</dbReference>
<dbReference type="GO" id="GO:0005829">
    <property type="term" value="C:cytosol"/>
    <property type="evidence" value="ECO:0007669"/>
    <property type="project" value="TreeGrafter"/>
</dbReference>
<dbReference type="GO" id="GO:0005525">
    <property type="term" value="F:GTP binding"/>
    <property type="evidence" value="ECO:0007669"/>
    <property type="project" value="UniProtKB-UniRule"/>
</dbReference>
<dbReference type="GO" id="GO:0003924">
    <property type="term" value="F:GTPase activity"/>
    <property type="evidence" value="ECO:0007669"/>
    <property type="project" value="InterPro"/>
</dbReference>
<dbReference type="GO" id="GO:0003746">
    <property type="term" value="F:translation elongation factor activity"/>
    <property type="evidence" value="ECO:0007669"/>
    <property type="project" value="UniProtKB-UniRule"/>
</dbReference>
<dbReference type="CDD" id="cd01884">
    <property type="entry name" value="EF_Tu"/>
    <property type="match status" value="1"/>
</dbReference>
<dbReference type="CDD" id="cd03697">
    <property type="entry name" value="EFTU_II"/>
    <property type="match status" value="1"/>
</dbReference>
<dbReference type="CDD" id="cd03707">
    <property type="entry name" value="EFTU_III"/>
    <property type="match status" value="1"/>
</dbReference>
<dbReference type="FunFam" id="2.40.30.10:FF:000001">
    <property type="entry name" value="Elongation factor Tu"/>
    <property type="match status" value="1"/>
</dbReference>
<dbReference type="FunFam" id="2.40.30.10:FF:000046">
    <property type="entry name" value="Elongation factor Tu"/>
    <property type="match status" value="1"/>
</dbReference>
<dbReference type="FunFam" id="3.40.50.300:FF:000003">
    <property type="entry name" value="Elongation factor Tu"/>
    <property type="match status" value="1"/>
</dbReference>
<dbReference type="Gene3D" id="3.40.50.300">
    <property type="entry name" value="P-loop containing nucleotide triphosphate hydrolases"/>
    <property type="match status" value="1"/>
</dbReference>
<dbReference type="Gene3D" id="2.40.30.10">
    <property type="entry name" value="Translation factors"/>
    <property type="match status" value="2"/>
</dbReference>
<dbReference type="HAMAP" id="MF_00118_B">
    <property type="entry name" value="EF_Tu_B"/>
    <property type="match status" value="1"/>
</dbReference>
<dbReference type="InterPro" id="IPR041709">
    <property type="entry name" value="EF-Tu_GTP-bd"/>
</dbReference>
<dbReference type="InterPro" id="IPR050055">
    <property type="entry name" value="EF-Tu_GTPase"/>
</dbReference>
<dbReference type="InterPro" id="IPR004161">
    <property type="entry name" value="EFTu-like_2"/>
</dbReference>
<dbReference type="InterPro" id="IPR033720">
    <property type="entry name" value="EFTU_2"/>
</dbReference>
<dbReference type="InterPro" id="IPR031157">
    <property type="entry name" value="G_TR_CS"/>
</dbReference>
<dbReference type="InterPro" id="IPR027417">
    <property type="entry name" value="P-loop_NTPase"/>
</dbReference>
<dbReference type="InterPro" id="IPR005225">
    <property type="entry name" value="Small_GTP-bd"/>
</dbReference>
<dbReference type="InterPro" id="IPR000795">
    <property type="entry name" value="T_Tr_GTP-bd_dom"/>
</dbReference>
<dbReference type="InterPro" id="IPR009000">
    <property type="entry name" value="Transl_B-barrel_sf"/>
</dbReference>
<dbReference type="InterPro" id="IPR009001">
    <property type="entry name" value="Transl_elong_EF1A/Init_IF2_C"/>
</dbReference>
<dbReference type="InterPro" id="IPR004541">
    <property type="entry name" value="Transl_elong_EFTu/EF1A_bac/org"/>
</dbReference>
<dbReference type="InterPro" id="IPR004160">
    <property type="entry name" value="Transl_elong_EFTu/EF1A_C"/>
</dbReference>
<dbReference type="NCBIfam" id="TIGR00485">
    <property type="entry name" value="EF-Tu"/>
    <property type="match status" value="1"/>
</dbReference>
<dbReference type="NCBIfam" id="NF000766">
    <property type="entry name" value="PRK00049.1"/>
    <property type="match status" value="1"/>
</dbReference>
<dbReference type="NCBIfam" id="NF009372">
    <property type="entry name" value="PRK12735.1"/>
    <property type="match status" value="1"/>
</dbReference>
<dbReference type="NCBIfam" id="NF009373">
    <property type="entry name" value="PRK12736.1"/>
    <property type="match status" value="1"/>
</dbReference>
<dbReference type="NCBIfam" id="TIGR00231">
    <property type="entry name" value="small_GTP"/>
    <property type="match status" value="1"/>
</dbReference>
<dbReference type="PANTHER" id="PTHR43721:SF22">
    <property type="entry name" value="ELONGATION FACTOR TU, MITOCHONDRIAL"/>
    <property type="match status" value="1"/>
</dbReference>
<dbReference type="PANTHER" id="PTHR43721">
    <property type="entry name" value="ELONGATION FACTOR TU-RELATED"/>
    <property type="match status" value="1"/>
</dbReference>
<dbReference type="Pfam" id="PF00009">
    <property type="entry name" value="GTP_EFTU"/>
    <property type="match status" value="1"/>
</dbReference>
<dbReference type="Pfam" id="PF03144">
    <property type="entry name" value="GTP_EFTU_D2"/>
    <property type="match status" value="1"/>
</dbReference>
<dbReference type="Pfam" id="PF03143">
    <property type="entry name" value="GTP_EFTU_D3"/>
    <property type="match status" value="1"/>
</dbReference>
<dbReference type="PRINTS" id="PR00315">
    <property type="entry name" value="ELONGATNFCT"/>
</dbReference>
<dbReference type="SUPFAM" id="SSF50465">
    <property type="entry name" value="EF-Tu/eEF-1alpha/eIF2-gamma C-terminal domain"/>
    <property type="match status" value="1"/>
</dbReference>
<dbReference type="SUPFAM" id="SSF52540">
    <property type="entry name" value="P-loop containing nucleoside triphosphate hydrolases"/>
    <property type="match status" value="1"/>
</dbReference>
<dbReference type="SUPFAM" id="SSF50447">
    <property type="entry name" value="Translation proteins"/>
    <property type="match status" value="1"/>
</dbReference>
<dbReference type="PROSITE" id="PS00301">
    <property type="entry name" value="G_TR_1"/>
    <property type="match status" value="1"/>
</dbReference>
<dbReference type="PROSITE" id="PS51722">
    <property type="entry name" value="G_TR_2"/>
    <property type="match status" value="1"/>
</dbReference>